<dbReference type="EC" id="2.4.1.21" evidence="1"/>
<dbReference type="EMBL" id="CP001078">
    <property type="protein sequence ID" value="ACD53157.1"/>
    <property type="molecule type" value="Genomic_DNA"/>
</dbReference>
<dbReference type="RefSeq" id="WP_012451121.1">
    <property type="nucleotide sequence ID" value="NC_010723.1"/>
</dbReference>
<dbReference type="SMR" id="B2V049"/>
<dbReference type="CAZy" id="GT5">
    <property type="family name" value="Glycosyltransferase Family 5"/>
</dbReference>
<dbReference type="KEGG" id="cbt:CLH_3166"/>
<dbReference type="HOGENOM" id="CLU_009583_18_2_9"/>
<dbReference type="UniPathway" id="UPA00164"/>
<dbReference type="GO" id="GO:0009011">
    <property type="term" value="F:alpha-1,4-glucan glucosyltransferase (ADP-glucose donor) activity"/>
    <property type="evidence" value="ECO:0007669"/>
    <property type="project" value="UniProtKB-UniRule"/>
</dbReference>
<dbReference type="GO" id="GO:0004373">
    <property type="term" value="F:alpha-1,4-glucan glucosyltransferase (UDP-glucose donor) activity"/>
    <property type="evidence" value="ECO:0007669"/>
    <property type="project" value="InterPro"/>
</dbReference>
<dbReference type="GO" id="GO:0005978">
    <property type="term" value="P:glycogen biosynthetic process"/>
    <property type="evidence" value="ECO:0007669"/>
    <property type="project" value="UniProtKB-UniRule"/>
</dbReference>
<dbReference type="CDD" id="cd03791">
    <property type="entry name" value="GT5_Glycogen_synthase_DULL1-like"/>
    <property type="match status" value="1"/>
</dbReference>
<dbReference type="Gene3D" id="3.40.50.2000">
    <property type="entry name" value="Glycogen Phosphorylase B"/>
    <property type="match status" value="2"/>
</dbReference>
<dbReference type="HAMAP" id="MF_00484">
    <property type="entry name" value="Glycogen_synth"/>
    <property type="match status" value="1"/>
</dbReference>
<dbReference type="InterPro" id="IPR001296">
    <property type="entry name" value="Glyco_trans_1"/>
</dbReference>
<dbReference type="InterPro" id="IPR011835">
    <property type="entry name" value="GS/SS"/>
</dbReference>
<dbReference type="InterPro" id="IPR013534">
    <property type="entry name" value="Starch_synth_cat_dom"/>
</dbReference>
<dbReference type="NCBIfam" id="TIGR02095">
    <property type="entry name" value="glgA"/>
    <property type="match status" value="1"/>
</dbReference>
<dbReference type="NCBIfam" id="NF001898">
    <property type="entry name" value="PRK00654.1-1"/>
    <property type="match status" value="1"/>
</dbReference>
<dbReference type="PANTHER" id="PTHR45825:SF11">
    <property type="entry name" value="ALPHA AMYLASE DOMAIN-CONTAINING PROTEIN"/>
    <property type="match status" value="1"/>
</dbReference>
<dbReference type="PANTHER" id="PTHR45825">
    <property type="entry name" value="GRANULE-BOUND STARCH SYNTHASE 1, CHLOROPLASTIC/AMYLOPLASTIC"/>
    <property type="match status" value="1"/>
</dbReference>
<dbReference type="Pfam" id="PF08323">
    <property type="entry name" value="Glyco_transf_5"/>
    <property type="match status" value="1"/>
</dbReference>
<dbReference type="Pfam" id="PF00534">
    <property type="entry name" value="Glycos_transf_1"/>
    <property type="match status" value="1"/>
</dbReference>
<dbReference type="SUPFAM" id="SSF53756">
    <property type="entry name" value="UDP-Glycosyltransferase/glycogen phosphorylase"/>
    <property type="match status" value="1"/>
</dbReference>
<gene>
    <name evidence="1" type="primary">glgA</name>
    <name type="ordered locus">CLH_3166</name>
</gene>
<sequence length="478" mass="55860">MRVLFVASEAHPFIKSGGLGDVAGALPKELARKGVDVRVVIPKYREINNELKNKLRFNKWFNVDVGWRNQYCGILEYEYDGVIYYFVDNEYYFSRGGMYGHYDDAERFAFFDRAVLDMIKQLDWKPNIIHCNDWQTGMIPVLLKLEYMRKDMFYWDIKSVFSIHNIAFQGVFDPVILPELFGYDYEQYTNTNLKFDDGVGFMKGAINYSDMITTVSYSYAEEIKTPEFGERLDWLLREKSYMLRGILNGIDYDEFNPKNDNLINKNYDVNNINDKYENKRNLQSELGLNVNENIPIIAMVTRLTSQKGLDLLVNISERLLQNDIQLVIVGTGDKHYEDHFKWLDYKYGNKVSANIRFDNNLAHKVYAASDMFLMPSLFEPCGLGQLIALRYGSIPIVRETGGLKDTIRAYNEYTGEGNGFSFYNYNADELLHIIEYALKIYYDKNKWSNLVKNAMNSNNSWSKSADEYLNMYKELSYR</sequence>
<reference key="1">
    <citation type="submission" date="2008-05" db="EMBL/GenBank/DDBJ databases">
        <title>Complete genome sequence of Clostridium botulinum E3 str. Alaska E43.</title>
        <authorList>
            <person name="Brinkac L.M."/>
            <person name="Brown J.L."/>
            <person name="Bruce D."/>
            <person name="Detter C."/>
            <person name="Munk C."/>
            <person name="Smith L.A."/>
            <person name="Smith T.J."/>
            <person name="Sutton G."/>
            <person name="Brettin T.S."/>
        </authorList>
    </citation>
    <scope>NUCLEOTIDE SEQUENCE [LARGE SCALE GENOMIC DNA]</scope>
    <source>
        <strain>Alaska E43 / Type E3</strain>
    </source>
</reference>
<comment type="function">
    <text evidence="1">Synthesizes alpha-1,4-glucan chains using ADP-glucose.</text>
</comment>
<comment type="catalytic activity">
    <reaction evidence="1">
        <text>[(1-&gt;4)-alpha-D-glucosyl](n) + ADP-alpha-D-glucose = [(1-&gt;4)-alpha-D-glucosyl](n+1) + ADP + H(+)</text>
        <dbReference type="Rhea" id="RHEA:18189"/>
        <dbReference type="Rhea" id="RHEA-COMP:9584"/>
        <dbReference type="Rhea" id="RHEA-COMP:9587"/>
        <dbReference type="ChEBI" id="CHEBI:15378"/>
        <dbReference type="ChEBI" id="CHEBI:15444"/>
        <dbReference type="ChEBI" id="CHEBI:57498"/>
        <dbReference type="ChEBI" id="CHEBI:456216"/>
        <dbReference type="EC" id="2.4.1.21"/>
    </reaction>
</comment>
<comment type="pathway">
    <text evidence="1">Glycan biosynthesis; glycogen biosynthesis.</text>
</comment>
<comment type="similarity">
    <text evidence="1">Belongs to the glycosyltransferase 1 family. Bacterial/plant glycogen synthase subfamily.</text>
</comment>
<proteinExistence type="inferred from homology"/>
<evidence type="ECO:0000255" key="1">
    <source>
        <dbReference type="HAMAP-Rule" id="MF_00484"/>
    </source>
</evidence>
<accession>B2V049</accession>
<feature type="chain" id="PRO_1000126061" description="Glycogen synthase">
    <location>
        <begin position="1"/>
        <end position="478"/>
    </location>
</feature>
<feature type="binding site" evidence="1">
    <location>
        <position position="15"/>
    </location>
    <ligand>
        <name>ADP-alpha-D-glucose</name>
        <dbReference type="ChEBI" id="CHEBI:57498"/>
    </ligand>
</feature>
<keyword id="KW-0320">Glycogen biosynthesis</keyword>
<keyword id="KW-0328">Glycosyltransferase</keyword>
<keyword id="KW-0808">Transferase</keyword>
<protein>
    <recommendedName>
        <fullName evidence="1">Glycogen synthase</fullName>
        <ecNumber evidence="1">2.4.1.21</ecNumber>
    </recommendedName>
    <alternativeName>
        <fullName evidence="1">Starch [bacterial glycogen] synthase</fullName>
    </alternativeName>
</protein>
<name>GLGA_CLOBA</name>
<organism>
    <name type="scientific">Clostridium botulinum (strain Alaska E43 / Type E3)</name>
    <dbReference type="NCBI Taxonomy" id="508767"/>
    <lineage>
        <taxon>Bacteria</taxon>
        <taxon>Bacillati</taxon>
        <taxon>Bacillota</taxon>
        <taxon>Clostridia</taxon>
        <taxon>Eubacteriales</taxon>
        <taxon>Clostridiaceae</taxon>
        <taxon>Clostridium</taxon>
    </lineage>
</organism>